<comment type="function">
    <text evidence="1 5">Membrane-anchoring subunit of succinate dehydrogenase (SDH) that is involved in complex II of the mitochondrial electron transport chain and is responsible for transferring electrons from succinate to ubiquinone (coenzyme Q) (PubMed:9533030). SDH also oxidizes malate to the non-canonical enol form of oxaloacetate, enol-oxaloacetate (By similarity). Enol-oxaloacetate, which is a potent inhibitor of the succinate dehydrogenase activity, is further isomerized into keto-oxaloacetate (By similarity).</text>
</comment>
<comment type="cofactor">
    <cofactor evidence="4">
        <name>heme b</name>
        <dbReference type="ChEBI" id="CHEBI:60344"/>
    </cofactor>
    <text evidence="4">The heme b is bound between the two transmembrane subunits SDHC and SDHD.</text>
</comment>
<comment type="pathway">
    <text evidence="5">Carbohydrate metabolism; tricarboxylic acid cycle.</text>
</comment>
<comment type="subunit">
    <text evidence="4">Component of complex II composed of four subunits: the flavoprotein (FP) SDHA, iron-sulfur protein (IP) SDHB, and a cytochrome b560 composed of SDHC and SDHD.</text>
</comment>
<comment type="interaction">
    <interactant intactId="EBI-1224539">
        <id>Q99643</id>
    </interactant>
    <interactant intactId="EBI-399080">
        <id>Q92993</id>
        <label>KAT5</label>
    </interactant>
    <organismsDiffer>false</organismsDiffer>
    <experiments>3</experiments>
</comment>
<comment type="interaction">
    <interactant intactId="EBI-1224539">
        <id>Q99643</id>
    </interactant>
    <interactant intactId="EBI-11742507">
        <id>Q8TAP4-4</id>
        <label>LMO3</label>
    </interactant>
    <organismsDiffer>false</organismsDiffer>
    <experiments>3</experiments>
</comment>
<comment type="interaction">
    <interactant intactId="EBI-1224539">
        <id>Q99643</id>
    </interactant>
    <interactant intactId="EBI-1383528">
        <id>P17252</id>
        <label>PRKCA</label>
    </interactant>
    <organismsDiffer>false</organismsDiffer>
    <experiments>3</experiments>
</comment>
<comment type="interaction">
    <interactant intactId="EBI-1224539">
        <id>Q99643</id>
    </interactant>
    <interactant intactId="EBI-9090795">
        <id>Q15047-2</id>
        <label>SETDB1</label>
    </interactant>
    <organismsDiffer>false</organismsDiffer>
    <experiments>3</experiments>
</comment>
<comment type="interaction">
    <interactant intactId="EBI-1224539">
        <id>Q99643</id>
    </interactant>
    <interactant intactId="EBI-359832">
        <id>P61981</id>
        <label>YWHAG</label>
    </interactant>
    <organismsDiffer>false</organismsDiffer>
    <experiments>3</experiments>
</comment>
<comment type="subcellular location">
    <subcellularLocation>
        <location evidence="4">Mitochondrion inner membrane</location>
        <topology evidence="4">Multi-pass membrane protein</topology>
    </subcellularLocation>
</comment>
<comment type="alternative products">
    <event type="alternative splicing"/>
    <isoform>
        <id>Q99643-1</id>
        <name>1</name>
        <sequence type="displayed"/>
    </isoform>
    <isoform>
        <id>Q99643-2</id>
        <name>2</name>
        <sequence type="described" ref="VSP_041383"/>
    </isoform>
    <isoform>
        <id>Q99643-3</id>
        <name>3</name>
        <name>CII-3b</name>
        <sequence type="described" ref="VSP_041382"/>
    </isoform>
    <isoform>
        <id>Q99643-4</id>
        <name>4</name>
        <sequence type="described" ref="VSP_041382 VSP_041383"/>
    </isoform>
    <isoform>
        <id>Q99643-5</id>
        <name>5</name>
        <sequence type="described" ref="VSP_041381"/>
    </isoform>
</comment>
<comment type="disease" evidence="2">
    <disease id="DI-01218">
        <name>Pheochromocytoma/paraganglioma syndrome 3</name>
        <acronym>PPGL3</acronym>
        <description>A form of pheochromocytoma/paraganglioma syndrome, a tumor predisposition syndrome characterized by the development of neuroendocrine tumors, usually in adulthood. Pheochromocytomas are catecholamine-producing tumors that arise from chromaffin cells in the adrenal medulla. Paragangliomas develop from sympathetic paraganglia in the thorax, abdomen, and pelvis, as well as from parasympathetic paraganglia in the head and neck. PPGL3 inheritance is autosomal dominant.</description>
        <dbReference type="MIM" id="605373"/>
    </disease>
    <text>The disease is caused by variants affecting the gene represented in this entry.</text>
</comment>
<comment type="disease" evidence="3">
    <disease id="DI-02128">
        <name>Paraganglioma and gastric stromal sarcoma</name>
        <acronym>PGGSS</acronym>
        <description>Gastrointestinal stromal tumors may be sporadic or inherited in an autosomal dominant manner, alone or as a component of a syndrome associated with other tumors, such as in the context of neurofibromatosis type 1 (NF1). Patients have both gastrointestinal stromal tumors and paragangliomas. Susceptibility to the tumors was inherited in an apparently autosomal dominant manner, with incomplete penetrance.</description>
        <dbReference type="MIM" id="606864"/>
    </disease>
    <text>The disease is caused by variants affecting the gene represented in this entry.</text>
</comment>
<comment type="similarity">
    <text evidence="9">Belongs to the cytochrome b560 family.</text>
</comment>
<comment type="online information" name="Atlas of Genetics and Cytogenetics in Oncology and Haematology">
    <link uri="https://atlasgeneticsoncology.org/gene/389/SDHC"/>
</comment>
<comment type="online information" name="TCA Cycle Gene Mutation Database">
    <link uri="https://databases.lovd.nl/shared/genes/SDHC"/>
</comment>
<proteinExistence type="evidence at protein level"/>
<keyword id="KW-0002">3D-structure</keyword>
<keyword id="KW-0025">Alternative splicing</keyword>
<keyword id="KW-0249">Electron transport</keyword>
<keyword id="KW-0349">Heme</keyword>
<keyword id="KW-0408">Iron</keyword>
<keyword id="KW-0472">Membrane</keyword>
<keyword id="KW-0479">Metal-binding</keyword>
<keyword id="KW-0496">Mitochondrion</keyword>
<keyword id="KW-0999">Mitochondrion inner membrane</keyword>
<keyword id="KW-1267">Proteomics identification</keyword>
<keyword id="KW-1185">Reference proteome</keyword>
<keyword id="KW-0809">Transit peptide</keyword>
<keyword id="KW-0812">Transmembrane</keyword>
<keyword id="KW-1133">Transmembrane helix</keyword>
<keyword id="KW-0813">Transport</keyword>
<keyword id="KW-0816">Tricarboxylic acid cycle</keyword>
<reference key="1">
    <citation type="submission" date="1996-05" db="EMBL/GenBank/DDBJ databases">
        <title>The cDNA sequence of human CII-3, an integral membrane protein subunit of complex II of the mitochondria electron transport chain.</title>
        <authorList>
            <person name="Au H.C."/>
            <person name="Raval P.J."/>
            <person name="Scheffler I.E."/>
        </authorList>
    </citation>
    <scope>NUCLEOTIDE SEQUENCE [MRNA] (ISOFORM 1)</scope>
</reference>
<reference key="2">
    <citation type="journal article" date="1997" name="Cytogenet. Cell Genet.">
        <title>Cytochrome b in human complex II (succinate-ubiquinone oxidoreductase): cDNA cloning of the components in liver mitochondria and chromosome assignment of the genes for the large (SDHC) and small (SDHD) subunits to 1q21 and 11q23.</title>
        <authorList>
            <person name="Hirawake H."/>
            <person name="Taniwaki M."/>
            <person name="Tamura A."/>
            <person name="Kojima S."/>
            <person name="Kita K."/>
        </authorList>
    </citation>
    <scope>NUCLEOTIDE SEQUENCE [MRNA] (ISOFORM 1)</scope>
    <scope>FUNCTION</scope>
    <scope>PATHWAY</scope>
    <source>
        <tissue>Liver</tissue>
    </source>
</reference>
<reference key="3">
    <citation type="journal article" date="1998" name="Gene">
        <title>Characterization of the human SDHC gene encoding one of the integral membrane proteins of succinate-quinone oxidoreductase in mitochondria.</title>
        <authorList>
            <person name="Elbehti-Green A."/>
            <person name="Au H.C."/>
            <person name="Mascarello J.T."/>
            <person name="Ream-Robinson D."/>
            <person name="Scheffler I.E."/>
        </authorList>
    </citation>
    <scope>NUCLEOTIDE SEQUENCE [GENOMIC DNA]</scope>
</reference>
<reference key="4">
    <citation type="journal article" date="1998" name="Mol. Genet. Metab.">
        <title>A human succinate-ubiquinone oxidoreductase CII-3 subunit gene ending in a polymorphic dinucleotide repeat is located within the sulfonylurea receptor (SUR) gene.</title>
        <authorList>
            <person name="Wohllk N."/>
            <person name="Thomas P.M."/>
            <person name="Huang E."/>
            <person name="Cote G.J."/>
        </authorList>
    </citation>
    <scope>NUCLEOTIDE SEQUENCE [MRNA] (ISOFORM 3)</scope>
    <source>
        <tissue>Peripheral blood</tissue>
    </source>
</reference>
<reference key="5">
    <citation type="submission" date="2005-10" db="EMBL/GenBank/DDBJ databases">
        <title>Homo sapiens succinate dehydrogenase complex, subunit C mRNA, alternative splicing variants.</title>
        <authorList>
            <person name="Hiatomi H."/>
            <person name="Kitano S."/>
            <person name="Kawano K."/>
            <person name="Hibi N."/>
        </authorList>
    </citation>
    <scope>NUCLEOTIDE SEQUENCE [MRNA] (ISOFORMS 2; 3; 4 AND 5)</scope>
</reference>
<reference key="6">
    <citation type="journal article" date="2004" name="Nat. Genet.">
        <title>Complete sequencing and characterization of 21,243 full-length human cDNAs.</title>
        <authorList>
            <person name="Ota T."/>
            <person name="Suzuki Y."/>
            <person name="Nishikawa T."/>
            <person name="Otsuki T."/>
            <person name="Sugiyama T."/>
            <person name="Irie R."/>
            <person name="Wakamatsu A."/>
            <person name="Hayashi K."/>
            <person name="Sato H."/>
            <person name="Nagai K."/>
            <person name="Kimura K."/>
            <person name="Makita H."/>
            <person name="Sekine M."/>
            <person name="Obayashi M."/>
            <person name="Nishi T."/>
            <person name="Shibahara T."/>
            <person name="Tanaka T."/>
            <person name="Ishii S."/>
            <person name="Yamamoto J."/>
            <person name="Saito K."/>
            <person name="Kawai Y."/>
            <person name="Isono Y."/>
            <person name="Nakamura Y."/>
            <person name="Nagahari K."/>
            <person name="Murakami K."/>
            <person name="Yasuda T."/>
            <person name="Iwayanagi T."/>
            <person name="Wagatsuma M."/>
            <person name="Shiratori A."/>
            <person name="Sudo H."/>
            <person name="Hosoiri T."/>
            <person name="Kaku Y."/>
            <person name="Kodaira H."/>
            <person name="Kondo H."/>
            <person name="Sugawara M."/>
            <person name="Takahashi M."/>
            <person name="Kanda K."/>
            <person name="Yokoi T."/>
            <person name="Furuya T."/>
            <person name="Kikkawa E."/>
            <person name="Omura Y."/>
            <person name="Abe K."/>
            <person name="Kamihara K."/>
            <person name="Katsuta N."/>
            <person name="Sato K."/>
            <person name="Tanikawa M."/>
            <person name="Yamazaki M."/>
            <person name="Ninomiya K."/>
            <person name="Ishibashi T."/>
            <person name="Yamashita H."/>
            <person name="Murakawa K."/>
            <person name="Fujimori K."/>
            <person name="Tanai H."/>
            <person name="Kimata M."/>
            <person name="Watanabe M."/>
            <person name="Hiraoka S."/>
            <person name="Chiba Y."/>
            <person name="Ishida S."/>
            <person name="Ono Y."/>
            <person name="Takiguchi S."/>
            <person name="Watanabe S."/>
            <person name="Yosida M."/>
            <person name="Hotuta T."/>
            <person name="Kusano J."/>
            <person name="Kanehori K."/>
            <person name="Takahashi-Fujii A."/>
            <person name="Hara H."/>
            <person name="Tanase T.-O."/>
            <person name="Nomura Y."/>
            <person name="Togiya S."/>
            <person name="Komai F."/>
            <person name="Hara R."/>
            <person name="Takeuchi K."/>
            <person name="Arita M."/>
            <person name="Imose N."/>
            <person name="Musashino K."/>
            <person name="Yuuki H."/>
            <person name="Oshima A."/>
            <person name="Sasaki N."/>
            <person name="Aotsuka S."/>
            <person name="Yoshikawa Y."/>
            <person name="Matsunawa H."/>
            <person name="Ichihara T."/>
            <person name="Shiohata N."/>
            <person name="Sano S."/>
            <person name="Moriya S."/>
            <person name="Momiyama H."/>
            <person name="Satoh N."/>
            <person name="Takami S."/>
            <person name="Terashima Y."/>
            <person name="Suzuki O."/>
            <person name="Nakagawa S."/>
            <person name="Senoh A."/>
            <person name="Mizoguchi H."/>
            <person name="Goto Y."/>
            <person name="Shimizu F."/>
            <person name="Wakebe H."/>
            <person name="Hishigaki H."/>
            <person name="Watanabe T."/>
            <person name="Sugiyama A."/>
            <person name="Takemoto M."/>
            <person name="Kawakami B."/>
            <person name="Yamazaki M."/>
            <person name="Watanabe K."/>
            <person name="Kumagai A."/>
            <person name="Itakura S."/>
            <person name="Fukuzumi Y."/>
            <person name="Fujimori Y."/>
            <person name="Komiyama M."/>
            <person name="Tashiro H."/>
            <person name="Tanigami A."/>
            <person name="Fujiwara T."/>
            <person name="Ono T."/>
            <person name="Yamada K."/>
            <person name="Fujii Y."/>
            <person name="Ozaki K."/>
            <person name="Hirao M."/>
            <person name="Ohmori Y."/>
            <person name="Kawabata A."/>
            <person name="Hikiji T."/>
            <person name="Kobatake N."/>
            <person name="Inagaki H."/>
            <person name="Ikema Y."/>
            <person name="Okamoto S."/>
            <person name="Okitani R."/>
            <person name="Kawakami T."/>
            <person name="Noguchi S."/>
            <person name="Itoh T."/>
            <person name="Shigeta K."/>
            <person name="Senba T."/>
            <person name="Matsumura K."/>
            <person name="Nakajima Y."/>
            <person name="Mizuno T."/>
            <person name="Morinaga M."/>
            <person name="Sasaki M."/>
            <person name="Togashi T."/>
            <person name="Oyama M."/>
            <person name="Hata H."/>
            <person name="Watanabe M."/>
            <person name="Komatsu T."/>
            <person name="Mizushima-Sugano J."/>
            <person name="Satoh T."/>
            <person name="Shirai Y."/>
            <person name="Takahashi Y."/>
            <person name="Nakagawa K."/>
            <person name="Okumura K."/>
            <person name="Nagase T."/>
            <person name="Nomura N."/>
            <person name="Kikuchi H."/>
            <person name="Masuho Y."/>
            <person name="Yamashita R."/>
            <person name="Nakai K."/>
            <person name="Yada T."/>
            <person name="Nakamura Y."/>
            <person name="Ohara O."/>
            <person name="Isogai T."/>
            <person name="Sugano S."/>
        </authorList>
    </citation>
    <scope>NUCLEOTIDE SEQUENCE [LARGE SCALE MRNA] (ISOFORM 2)</scope>
    <source>
        <tissue>Amygdala</tissue>
    </source>
</reference>
<reference key="7">
    <citation type="journal article" date="2006" name="Nature">
        <title>The DNA sequence and biological annotation of human chromosome 1.</title>
        <authorList>
            <person name="Gregory S.G."/>
            <person name="Barlow K.F."/>
            <person name="McLay K.E."/>
            <person name="Kaul R."/>
            <person name="Swarbreck D."/>
            <person name="Dunham A."/>
            <person name="Scott C.E."/>
            <person name="Howe K.L."/>
            <person name="Woodfine K."/>
            <person name="Spencer C.C.A."/>
            <person name="Jones M.C."/>
            <person name="Gillson C."/>
            <person name="Searle S."/>
            <person name="Zhou Y."/>
            <person name="Kokocinski F."/>
            <person name="McDonald L."/>
            <person name="Evans R."/>
            <person name="Phillips K."/>
            <person name="Atkinson A."/>
            <person name="Cooper R."/>
            <person name="Jones C."/>
            <person name="Hall R.E."/>
            <person name="Andrews T.D."/>
            <person name="Lloyd C."/>
            <person name="Ainscough R."/>
            <person name="Almeida J.P."/>
            <person name="Ambrose K.D."/>
            <person name="Anderson F."/>
            <person name="Andrew R.W."/>
            <person name="Ashwell R.I.S."/>
            <person name="Aubin K."/>
            <person name="Babbage A.K."/>
            <person name="Bagguley C.L."/>
            <person name="Bailey J."/>
            <person name="Beasley H."/>
            <person name="Bethel G."/>
            <person name="Bird C.P."/>
            <person name="Bray-Allen S."/>
            <person name="Brown J.Y."/>
            <person name="Brown A.J."/>
            <person name="Buckley D."/>
            <person name="Burton J."/>
            <person name="Bye J."/>
            <person name="Carder C."/>
            <person name="Chapman J.C."/>
            <person name="Clark S.Y."/>
            <person name="Clarke G."/>
            <person name="Clee C."/>
            <person name="Cobley V."/>
            <person name="Collier R.E."/>
            <person name="Corby N."/>
            <person name="Coville G.J."/>
            <person name="Davies J."/>
            <person name="Deadman R."/>
            <person name="Dunn M."/>
            <person name="Earthrowl M."/>
            <person name="Ellington A.G."/>
            <person name="Errington H."/>
            <person name="Frankish A."/>
            <person name="Frankland J."/>
            <person name="French L."/>
            <person name="Garner P."/>
            <person name="Garnett J."/>
            <person name="Gay L."/>
            <person name="Ghori M.R.J."/>
            <person name="Gibson R."/>
            <person name="Gilby L.M."/>
            <person name="Gillett W."/>
            <person name="Glithero R.J."/>
            <person name="Grafham D.V."/>
            <person name="Griffiths C."/>
            <person name="Griffiths-Jones S."/>
            <person name="Grocock R."/>
            <person name="Hammond S."/>
            <person name="Harrison E.S.I."/>
            <person name="Hart E."/>
            <person name="Haugen E."/>
            <person name="Heath P.D."/>
            <person name="Holmes S."/>
            <person name="Holt K."/>
            <person name="Howden P.J."/>
            <person name="Hunt A.R."/>
            <person name="Hunt S.E."/>
            <person name="Hunter G."/>
            <person name="Isherwood J."/>
            <person name="James R."/>
            <person name="Johnson C."/>
            <person name="Johnson D."/>
            <person name="Joy A."/>
            <person name="Kay M."/>
            <person name="Kershaw J.K."/>
            <person name="Kibukawa M."/>
            <person name="Kimberley A.M."/>
            <person name="King A."/>
            <person name="Knights A.J."/>
            <person name="Lad H."/>
            <person name="Laird G."/>
            <person name="Lawlor S."/>
            <person name="Leongamornlert D.A."/>
            <person name="Lloyd D.M."/>
            <person name="Loveland J."/>
            <person name="Lovell J."/>
            <person name="Lush M.J."/>
            <person name="Lyne R."/>
            <person name="Martin S."/>
            <person name="Mashreghi-Mohammadi M."/>
            <person name="Matthews L."/>
            <person name="Matthews N.S.W."/>
            <person name="McLaren S."/>
            <person name="Milne S."/>
            <person name="Mistry S."/>
            <person name="Moore M.J.F."/>
            <person name="Nickerson T."/>
            <person name="O'Dell C.N."/>
            <person name="Oliver K."/>
            <person name="Palmeiri A."/>
            <person name="Palmer S.A."/>
            <person name="Parker A."/>
            <person name="Patel D."/>
            <person name="Pearce A.V."/>
            <person name="Peck A.I."/>
            <person name="Pelan S."/>
            <person name="Phelps K."/>
            <person name="Phillimore B.J."/>
            <person name="Plumb R."/>
            <person name="Rajan J."/>
            <person name="Raymond C."/>
            <person name="Rouse G."/>
            <person name="Saenphimmachak C."/>
            <person name="Sehra H.K."/>
            <person name="Sheridan E."/>
            <person name="Shownkeen R."/>
            <person name="Sims S."/>
            <person name="Skuce C.D."/>
            <person name="Smith M."/>
            <person name="Steward C."/>
            <person name="Subramanian S."/>
            <person name="Sycamore N."/>
            <person name="Tracey A."/>
            <person name="Tromans A."/>
            <person name="Van Helmond Z."/>
            <person name="Wall M."/>
            <person name="Wallis J.M."/>
            <person name="White S."/>
            <person name="Whitehead S.L."/>
            <person name="Wilkinson J.E."/>
            <person name="Willey D.L."/>
            <person name="Williams H."/>
            <person name="Wilming L."/>
            <person name="Wray P.W."/>
            <person name="Wu Z."/>
            <person name="Coulson A."/>
            <person name="Vaudin M."/>
            <person name="Sulston J.E."/>
            <person name="Durbin R.M."/>
            <person name="Hubbard T."/>
            <person name="Wooster R."/>
            <person name="Dunham I."/>
            <person name="Carter N.P."/>
            <person name="McVean G."/>
            <person name="Ross M.T."/>
            <person name="Harrow J."/>
            <person name="Olson M.V."/>
            <person name="Beck S."/>
            <person name="Rogers J."/>
            <person name="Bentley D.R."/>
        </authorList>
    </citation>
    <scope>NUCLEOTIDE SEQUENCE [LARGE SCALE GENOMIC DNA]</scope>
</reference>
<reference key="8">
    <citation type="submission" date="2005-09" db="EMBL/GenBank/DDBJ databases">
        <authorList>
            <person name="Mural R.J."/>
            <person name="Istrail S."/>
            <person name="Sutton G.G."/>
            <person name="Florea L."/>
            <person name="Halpern A.L."/>
            <person name="Mobarry C.M."/>
            <person name="Lippert R."/>
            <person name="Walenz B."/>
            <person name="Shatkay H."/>
            <person name="Dew I."/>
            <person name="Miller J.R."/>
            <person name="Flanigan M.J."/>
            <person name="Edwards N.J."/>
            <person name="Bolanos R."/>
            <person name="Fasulo D."/>
            <person name="Halldorsson B.V."/>
            <person name="Hannenhalli S."/>
            <person name="Turner R."/>
            <person name="Yooseph S."/>
            <person name="Lu F."/>
            <person name="Nusskern D.R."/>
            <person name="Shue B.C."/>
            <person name="Zheng X.H."/>
            <person name="Zhong F."/>
            <person name="Delcher A.L."/>
            <person name="Huson D.H."/>
            <person name="Kravitz S.A."/>
            <person name="Mouchard L."/>
            <person name="Reinert K."/>
            <person name="Remington K.A."/>
            <person name="Clark A.G."/>
            <person name="Waterman M.S."/>
            <person name="Eichler E.E."/>
            <person name="Adams M.D."/>
            <person name="Hunkapiller M.W."/>
            <person name="Myers E.W."/>
            <person name="Venter J.C."/>
        </authorList>
    </citation>
    <scope>NUCLEOTIDE SEQUENCE [LARGE SCALE GENOMIC DNA]</scope>
</reference>
<reference key="9">
    <citation type="journal article" date="2004" name="Genome Res.">
        <title>The status, quality, and expansion of the NIH full-length cDNA project: the Mammalian Gene Collection (MGC).</title>
        <authorList>
            <consortium name="The MGC Project Team"/>
        </authorList>
    </citation>
    <scope>NUCLEOTIDE SEQUENCE [LARGE SCALE MRNA] (ISOFORM 1)</scope>
    <source>
        <tissue>Brain</tissue>
        <tissue>Mammary gland</tissue>
        <tissue>Skeletal muscle</tissue>
    </source>
</reference>
<reference key="10">
    <citation type="journal article" date="2000" name="Nat. Genet.">
        <title>Mutations in SDHC cause autosomal dominant paraganglioma, type 3.</title>
        <authorList>
            <person name="Niemann S."/>
            <person name="Mueller U."/>
        </authorList>
    </citation>
    <scope>INVOLVEMENT IN PPGL3</scope>
</reference>
<reference key="11">
    <citation type="journal article" date="2007" name="N. Engl. J. Med.">
        <title>Familial gastrointestinal stromal tumors and germ-line mutations.</title>
        <authorList>
            <person name="McWhinney S.R."/>
            <person name="Pasini B."/>
            <person name="Stratakis C.A."/>
        </authorList>
    </citation>
    <scope>INVOLVEMENT IN PGGSS</scope>
</reference>
<reference key="12">
    <citation type="journal article" date="2011" name="BMC Syst. Biol.">
        <title>Initial characterization of the human central proteome.</title>
        <authorList>
            <person name="Burkard T.R."/>
            <person name="Planyavsky M."/>
            <person name="Kaupe I."/>
            <person name="Breitwieser F.P."/>
            <person name="Buerckstuemmer T."/>
            <person name="Bennett K.L."/>
            <person name="Superti-Furga G."/>
            <person name="Colinge J."/>
        </authorList>
    </citation>
    <scope>IDENTIFICATION BY MASS SPECTROMETRY [LARGE SCALE ANALYSIS]</scope>
</reference>
<reference key="13">
    <citation type="journal article" date="2015" name="Proteomics">
        <title>N-terminome analysis of the human mitochondrial proteome.</title>
        <authorList>
            <person name="Vaca Jacome A.S."/>
            <person name="Rabilloud T."/>
            <person name="Schaeffer-Reiss C."/>
            <person name="Rompais M."/>
            <person name="Ayoub D."/>
            <person name="Lane L."/>
            <person name="Bairoch A."/>
            <person name="Van Dorsselaer A."/>
            <person name="Carapito C."/>
        </authorList>
    </citation>
    <scope>IDENTIFICATION BY MASS SPECTROMETRY [LARGE SCALE ANALYSIS]</scope>
</reference>
<reference evidence="10" key="14">
    <citation type="journal article" date="2023" name="Proc. Natl. Acad. Sci. U.S.A.">
        <title>Structure of the human respiratory complex II.</title>
        <authorList>
            <person name="Du Z."/>
            <person name="Zhou X."/>
            <person name="Lai Y."/>
            <person name="Xu J."/>
            <person name="Zhang Y."/>
            <person name="Zhou S."/>
            <person name="Feng Z."/>
            <person name="Yu L."/>
            <person name="Tang Y."/>
            <person name="Wang W."/>
            <person name="Yu L."/>
            <person name="Tian C."/>
            <person name="Ran T."/>
            <person name="Chen H."/>
            <person name="Guddat L.W."/>
            <person name="Liu F."/>
            <person name="Gao Y."/>
            <person name="Rao Z."/>
            <person name="Gong H."/>
        </authorList>
    </citation>
    <scope>STRUCTURE BY ELECTRON MICROSCOPY (2.86 ANGSTROMS) IN COMPLEXES WITH HEME</scope>
    <scope>COFACTOR</scope>
    <scope>SUBUNIT</scope>
    <scope>SUBCELLULAR LOCATION</scope>
</reference>
<gene>
    <name type="primary">SDHC</name>
    <name type="synonym">CYB560</name>
    <name type="synonym">SDH3</name>
</gene>
<sequence>MAALLLRHVGRHCLRAHFSPQLCIRNAVPLGTTAKEEMERFWNKNIGSNRPLSPHITIYSWSLPMAMSICHRGTGIALSAGVSLFGMSALLLPGNFESYLELVKSLCLGPALIHTAKFALVFPLMYHTWNGIRHLMWDLGKGLKIPQLYQSGVVVLVLTVLSSMGLAAM</sequence>
<dbReference type="EMBL" id="U57877">
    <property type="protein sequence ID" value="AAB41838.1"/>
    <property type="molecule type" value="mRNA"/>
</dbReference>
<dbReference type="EMBL" id="D49737">
    <property type="protein sequence ID" value="BAA31998.1"/>
    <property type="molecule type" value="mRNA"/>
</dbReference>
<dbReference type="EMBL" id="AF039594">
    <property type="protein sequence ID" value="AAC27993.1"/>
    <property type="molecule type" value="Genomic_DNA"/>
</dbReference>
<dbReference type="EMBL" id="AF039589">
    <property type="protein sequence ID" value="AAC27993.1"/>
    <property type="status" value="JOINED"/>
    <property type="molecule type" value="Genomic_DNA"/>
</dbReference>
<dbReference type="EMBL" id="AF039590">
    <property type="protein sequence ID" value="AAC27993.1"/>
    <property type="status" value="JOINED"/>
    <property type="molecule type" value="Genomic_DNA"/>
</dbReference>
<dbReference type="EMBL" id="AF039591">
    <property type="protein sequence ID" value="AAC27993.1"/>
    <property type="status" value="JOINED"/>
    <property type="molecule type" value="Genomic_DNA"/>
</dbReference>
<dbReference type="EMBL" id="AF039592">
    <property type="protein sequence ID" value="AAC27993.1"/>
    <property type="status" value="JOINED"/>
    <property type="molecule type" value="Genomic_DNA"/>
</dbReference>
<dbReference type="EMBL" id="AF039593">
    <property type="protein sequence ID" value="AAC27993.1"/>
    <property type="status" value="JOINED"/>
    <property type="molecule type" value="Genomic_DNA"/>
</dbReference>
<dbReference type="EMBL" id="AF081495">
    <property type="protein sequence ID" value="AAC31940.1"/>
    <property type="molecule type" value="Genomic_DNA"/>
</dbReference>
<dbReference type="EMBL" id="AB201252">
    <property type="protein sequence ID" value="BAE46977.1"/>
    <property type="molecule type" value="mRNA"/>
</dbReference>
<dbReference type="EMBL" id="AB211234">
    <property type="protein sequence ID" value="BAE46978.1"/>
    <property type="molecule type" value="mRNA"/>
</dbReference>
<dbReference type="EMBL" id="AB211235">
    <property type="protein sequence ID" value="BAE46979.1"/>
    <property type="molecule type" value="mRNA"/>
</dbReference>
<dbReference type="EMBL" id="AB212048">
    <property type="protein sequence ID" value="BAE46980.1"/>
    <property type="molecule type" value="mRNA"/>
</dbReference>
<dbReference type="EMBL" id="AK294305">
    <property type="protein sequence ID" value="BAG57586.1"/>
    <property type="molecule type" value="mRNA"/>
</dbReference>
<dbReference type="EMBL" id="AL592295">
    <property type="status" value="NOT_ANNOTATED_CDS"/>
    <property type="molecule type" value="Genomic_DNA"/>
</dbReference>
<dbReference type="EMBL" id="CH471121">
    <property type="protein sequence ID" value="EAW52600.1"/>
    <property type="molecule type" value="Genomic_DNA"/>
</dbReference>
<dbReference type="EMBL" id="CH471121">
    <property type="protein sequence ID" value="EAW52604.1"/>
    <property type="molecule type" value="Genomic_DNA"/>
</dbReference>
<dbReference type="EMBL" id="BC020808">
    <property type="protein sequence ID" value="AAH20808.1"/>
    <property type="molecule type" value="mRNA"/>
</dbReference>
<dbReference type="EMBL" id="BC033626">
    <property type="protein sequence ID" value="AAH33626.1"/>
    <property type="molecule type" value="mRNA"/>
</dbReference>
<dbReference type="EMBL" id="BC066329">
    <property type="protein sequence ID" value="AAH66329.1"/>
    <property type="molecule type" value="mRNA"/>
</dbReference>
<dbReference type="CCDS" id="CCDS1230.1">
    <molecule id="Q99643-1"/>
</dbReference>
<dbReference type="CCDS" id="CCDS41431.1">
    <molecule id="Q99643-2"/>
</dbReference>
<dbReference type="CCDS" id="CCDS41432.1">
    <molecule id="Q99643-5"/>
</dbReference>
<dbReference type="CCDS" id="CCDS44263.1">
    <molecule id="Q99643-3"/>
</dbReference>
<dbReference type="CCDS" id="CCDS60330.1">
    <molecule id="Q99643-4"/>
</dbReference>
<dbReference type="RefSeq" id="NP_001030588.1">
    <molecule id="Q99643-2"/>
    <property type="nucleotide sequence ID" value="NM_001035511.3"/>
</dbReference>
<dbReference type="RefSeq" id="NP_001030589.1">
    <molecule id="Q99643-3"/>
    <property type="nucleotide sequence ID" value="NM_001035512.3"/>
</dbReference>
<dbReference type="RefSeq" id="NP_001030590.1">
    <molecule id="Q99643-5"/>
    <property type="nucleotide sequence ID" value="NM_001035513.3"/>
</dbReference>
<dbReference type="RefSeq" id="NP_001265101.1">
    <molecule id="Q99643-4"/>
    <property type="nucleotide sequence ID" value="NM_001278172.3"/>
</dbReference>
<dbReference type="RefSeq" id="NP_002992.1">
    <molecule id="Q99643-1"/>
    <property type="nucleotide sequence ID" value="NM_003001.5"/>
</dbReference>
<dbReference type="PDB" id="8GS8">
    <property type="method" value="EM"/>
    <property type="resolution" value="2.86 A"/>
    <property type="chains" value="C=1-169"/>
</dbReference>
<dbReference type="PDBsum" id="8GS8"/>
<dbReference type="EMDB" id="EMD-34225"/>
<dbReference type="SMR" id="Q99643"/>
<dbReference type="BioGRID" id="112292">
    <property type="interactions" value="48"/>
</dbReference>
<dbReference type="ComplexPortal" id="CPX-561">
    <property type="entry name" value="Mitochondrial respiratory chain complex II"/>
</dbReference>
<dbReference type="FunCoup" id="Q99643">
    <property type="interactions" value="1477"/>
</dbReference>
<dbReference type="IntAct" id="Q99643">
    <property type="interactions" value="17"/>
</dbReference>
<dbReference type="MINT" id="Q99643"/>
<dbReference type="STRING" id="9606.ENSP00000356953"/>
<dbReference type="DrugBank" id="DB04141">
    <property type="generic name" value="2-Hexyloxy-6-Hydroxymethyl-Tetrahydro-Pyran-3,4,5-Triol"/>
</dbReference>
<dbReference type="DrugBank" id="DB00139">
    <property type="generic name" value="Succinic acid"/>
</dbReference>
<dbReference type="DrugBank" id="DB08689">
    <property type="generic name" value="Ubiquinone Q1"/>
</dbReference>
<dbReference type="TCDB" id="3.D.10.1.7">
    <property type="family name" value="the prokaryotic succinate dehydrogenase (sdh) family"/>
</dbReference>
<dbReference type="iPTMnet" id="Q99643"/>
<dbReference type="PhosphoSitePlus" id="Q99643"/>
<dbReference type="SwissPalm" id="Q99643"/>
<dbReference type="BioMuta" id="SDHC"/>
<dbReference type="DMDM" id="5915811"/>
<dbReference type="jPOST" id="Q99643"/>
<dbReference type="MassIVE" id="Q99643"/>
<dbReference type="PaxDb" id="9606-ENSP00000356953"/>
<dbReference type="PeptideAtlas" id="Q99643"/>
<dbReference type="ProteomicsDB" id="78373">
    <molecule id="Q99643-1"/>
</dbReference>
<dbReference type="ProteomicsDB" id="78374">
    <molecule id="Q99643-2"/>
</dbReference>
<dbReference type="ProteomicsDB" id="78375">
    <molecule id="Q99643-3"/>
</dbReference>
<dbReference type="ProteomicsDB" id="78376">
    <molecule id="Q99643-4"/>
</dbReference>
<dbReference type="ProteomicsDB" id="78377">
    <molecule id="Q99643-5"/>
</dbReference>
<dbReference type="Pumba" id="Q99643"/>
<dbReference type="TopDownProteomics" id="Q99643-1">
    <molecule id="Q99643-1"/>
</dbReference>
<dbReference type="Antibodypedia" id="34309">
    <property type="antibodies" value="185 antibodies from 25 providers"/>
</dbReference>
<dbReference type="CPTC" id="Q99643">
    <property type="antibodies" value="1 antibody"/>
</dbReference>
<dbReference type="DNASU" id="6391"/>
<dbReference type="Ensembl" id="ENST00000342751.8">
    <molecule id="Q99643-2"/>
    <property type="protein sequence ID" value="ENSP00000356952.3"/>
    <property type="gene ID" value="ENSG00000143252.17"/>
</dbReference>
<dbReference type="Ensembl" id="ENST00000367975.7">
    <molecule id="Q99643-1"/>
    <property type="protein sequence ID" value="ENSP00000356953.3"/>
    <property type="gene ID" value="ENSG00000143252.17"/>
</dbReference>
<dbReference type="Ensembl" id="ENST00000392169.6">
    <molecule id="Q99643-5"/>
    <property type="protein sequence ID" value="ENSP00000376009.2"/>
    <property type="gene ID" value="ENSG00000143252.17"/>
</dbReference>
<dbReference type="Ensembl" id="ENST00000432287.6">
    <molecule id="Q99643-3"/>
    <property type="protein sequence ID" value="ENSP00000390558.2"/>
    <property type="gene ID" value="ENSG00000143252.17"/>
</dbReference>
<dbReference type="Ensembl" id="ENST00000513009.5">
    <molecule id="Q99643-4"/>
    <property type="protein sequence ID" value="ENSP00000423260.1"/>
    <property type="gene ID" value="ENSG00000143252.17"/>
</dbReference>
<dbReference type="GeneID" id="6391"/>
<dbReference type="KEGG" id="hsa:6391"/>
<dbReference type="MANE-Select" id="ENST00000367975.7">
    <property type="protein sequence ID" value="ENSP00000356953.3"/>
    <property type="RefSeq nucleotide sequence ID" value="NM_003001.5"/>
    <property type="RefSeq protein sequence ID" value="NP_002992.1"/>
</dbReference>
<dbReference type="UCSC" id="uc001gag.4">
    <molecule id="Q99643-1"/>
    <property type="organism name" value="human"/>
</dbReference>
<dbReference type="AGR" id="HGNC:10682"/>
<dbReference type="CTD" id="6391"/>
<dbReference type="DisGeNET" id="6391"/>
<dbReference type="GeneCards" id="SDHC"/>
<dbReference type="GeneReviews" id="SDHC"/>
<dbReference type="HGNC" id="HGNC:10682">
    <property type="gene designation" value="SDHC"/>
</dbReference>
<dbReference type="HPA" id="ENSG00000143252">
    <property type="expression patterns" value="Low tissue specificity"/>
</dbReference>
<dbReference type="MalaCards" id="SDHC"/>
<dbReference type="MIM" id="602413">
    <property type="type" value="gene"/>
</dbReference>
<dbReference type="MIM" id="605373">
    <property type="type" value="phenotype"/>
</dbReference>
<dbReference type="MIM" id="606864">
    <property type="type" value="phenotype"/>
</dbReference>
<dbReference type="neXtProt" id="NX_Q99643"/>
<dbReference type="OpenTargets" id="ENSG00000143252"/>
<dbReference type="Orphanet" id="97286">
    <property type="disease" value="Carney-Stratakis syndrome"/>
</dbReference>
<dbReference type="Orphanet" id="201">
    <property type="disease" value="Cowden syndrome"/>
</dbReference>
<dbReference type="Orphanet" id="44890">
    <property type="disease" value="Gastrointestinal stromal tumor"/>
</dbReference>
<dbReference type="Orphanet" id="29072">
    <property type="disease" value="Hereditary pheochromocytoma-paraganglioma"/>
</dbReference>
<dbReference type="PharmGKB" id="PA35607"/>
<dbReference type="VEuPathDB" id="HostDB:ENSG00000143252"/>
<dbReference type="eggNOG" id="KOG0449">
    <property type="taxonomic scope" value="Eukaryota"/>
</dbReference>
<dbReference type="GeneTree" id="ENSGT00390000000566"/>
<dbReference type="HOGENOM" id="CLU_094691_1_1_1"/>
<dbReference type="InParanoid" id="Q99643"/>
<dbReference type="OMA" id="MNGIRHL"/>
<dbReference type="OrthoDB" id="588261at2759"/>
<dbReference type="PAN-GO" id="Q99643">
    <property type="GO annotations" value="2 GO annotations based on evolutionary models"/>
</dbReference>
<dbReference type="PhylomeDB" id="Q99643"/>
<dbReference type="TreeFam" id="TF313317"/>
<dbReference type="BioCyc" id="MetaCyc:HS07014-MONOMER"/>
<dbReference type="BRENDA" id="1.3.5.1">
    <property type="organism ID" value="2681"/>
</dbReference>
<dbReference type="PathwayCommons" id="Q99643"/>
<dbReference type="Reactome" id="R-HSA-611105">
    <property type="pathway name" value="Respiratory electron transport"/>
</dbReference>
<dbReference type="Reactome" id="R-HSA-71403">
    <property type="pathway name" value="Citric acid cycle (TCA cycle)"/>
</dbReference>
<dbReference type="Reactome" id="R-HSA-9854311">
    <property type="pathway name" value="Maturation of TCA enzymes and regulation of TCA cycle"/>
</dbReference>
<dbReference type="SignaLink" id="Q99643"/>
<dbReference type="SIGNOR" id="Q99643"/>
<dbReference type="UniPathway" id="UPA00223"/>
<dbReference type="BioGRID-ORCS" id="6391">
    <property type="hits" value="613 hits in 1138 CRISPR screens"/>
</dbReference>
<dbReference type="ChiTaRS" id="SDHC">
    <property type="organism name" value="human"/>
</dbReference>
<dbReference type="GeneWiki" id="Succinate_dehydrogenase_complex_subunit_C"/>
<dbReference type="GenomeRNAi" id="6391"/>
<dbReference type="Pharos" id="Q99643">
    <property type="development level" value="Tbio"/>
</dbReference>
<dbReference type="PRO" id="PR:Q99643"/>
<dbReference type="Proteomes" id="UP000005640">
    <property type="component" value="Chromosome 1"/>
</dbReference>
<dbReference type="RNAct" id="Q99643">
    <property type="molecule type" value="protein"/>
</dbReference>
<dbReference type="Bgee" id="ENSG00000143252">
    <property type="expression patterns" value="Expressed in islet of Langerhans and 100 other cell types or tissues"/>
</dbReference>
<dbReference type="ExpressionAtlas" id="Q99643">
    <property type="expression patterns" value="baseline and differential"/>
</dbReference>
<dbReference type="GO" id="GO:0016020">
    <property type="term" value="C:membrane"/>
    <property type="evidence" value="ECO:0000304"/>
    <property type="project" value="UniProtKB"/>
</dbReference>
<dbReference type="GO" id="GO:0005743">
    <property type="term" value="C:mitochondrial inner membrane"/>
    <property type="evidence" value="ECO:0000250"/>
    <property type="project" value="UniProtKB"/>
</dbReference>
<dbReference type="GO" id="GO:0005739">
    <property type="term" value="C:mitochondrion"/>
    <property type="evidence" value="ECO:0006056"/>
    <property type="project" value="FlyBase"/>
</dbReference>
<dbReference type="GO" id="GO:0045273">
    <property type="term" value="C:respiratory chain complex II (succinate dehydrogenase)"/>
    <property type="evidence" value="ECO:0000314"/>
    <property type="project" value="UniProtKB"/>
</dbReference>
<dbReference type="GO" id="GO:0009055">
    <property type="term" value="F:electron transfer activity"/>
    <property type="evidence" value="ECO:0007669"/>
    <property type="project" value="InterPro"/>
</dbReference>
<dbReference type="GO" id="GO:0020037">
    <property type="term" value="F:heme binding"/>
    <property type="evidence" value="ECO:0000250"/>
    <property type="project" value="UniProtKB"/>
</dbReference>
<dbReference type="GO" id="GO:0046872">
    <property type="term" value="F:metal ion binding"/>
    <property type="evidence" value="ECO:0007669"/>
    <property type="project" value="UniProtKB-KW"/>
</dbReference>
<dbReference type="GO" id="GO:0009060">
    <property type="term" value="P:aerobic respiration"/>
    <property type="evidence" value="ECO:0000304"/>
    <property type="project" value="UniProtKB"/>
</dbReference>
<dbReference type="GO" id="GO:0006121">
    <property type="term" value="P:mitochondrial electron transport, succinate to ubiquinone"/>
    <property type="evidence" value="ECO:0000318"/>
    <property type="project" value="GO_Central"/>
</dbReference>
<dbReference type="GO" id="GO:0042776">
    <property type="term" value="P:proton motive force-driven mitochondrial ATP synthesis"/>
    <property type="evidence" value="ECO:0000303"/>
    <property type="project" value="ComplexPortal"/>
</dbReference>
<dbReference type="GO" id="GO:0006099">
    <property type="term" value="P:tricarboxylic acid cycle"/>
    <property type="evidence" value="ECO:0000304"/>
    <property type="project" value="UniProtKB"/>
</dbReference>
<dbReference type="CDD" id="cd03499">
    <property type="entry name" value="SQR_TypeC_SdhC"/>
    <property type="match status" value="1"/>
</dbReference>
<dbReference type="FunFam" id="1.20.1300.10:FF:000006">
    <property type="entry name" value="Succinate dehydrogenase cytochrome b560 subunit, mitochondrial"/>
    <property type="match status" value="1"/>
</dbReference>
<dbReference type="FunFam" id="1.20.5.540:FF:000002">
    <property type="entry name" value="Succinate dehydrogenase cytochrome b560 subunit, mitochondrial"/>
    <property type="match status" value="1"/>
</dbReference>
<dbReference type="Gene3D" id="1.20.1300.10">
    <property type="entry name" value="Fumarate reductase/succinate dehydrogenase, transmembrane subunit"/>
    <property type="match status" value="1"/>
</dbReference>
<dbReference type="Gene3D" id="1.20.5.540">
    <property type="entry name" value="Single helix bin"/>
    <property type="match status" value="1"/>
</dbReference>
<dbReference type="InterPro" id="IPR034804">
    <property type="entry name" value="SQR/QFR_C/D"/>
</dbReference>
<dbReference type="InterPro" id="IPR018495">
    <property type="entry name" value="Succ_DH_cyt_bsu_CS"/>
</dbReference>
<dbReference type="InterPro" id="IPR014314">
    <property type="entry name" value="Succ_DH_cytb556"/>
</dbReference>
<dbReference type="InterPro" id="IPR000701">
    <property type="entry name" value="SuccDH_FuR_B_TM-su"/>
</dbReference>
<dbReference type="NCBIfam" id="TIGR02970">
    <property type="entry name" value="succ_dehyd_cytB"/>
    <property type="match status" value="1"/>
</dbReference>
<dbReference type="PANTHER" id="PTHR10978">
    <property type="entry name" value="SUCCINATE DEHYDROGENASE CYTOCHROME B560 SUBUNIT"/>
    <property type="match status" value="1"/>
</dbReference>
<dbReference type="PANTHER" id="PTHR10978:SF20">
    <property type="entry name" value="SUCCINATE DEHYDROGENASE CYTOCHROME B560 SUBUNIT, MITOCHONDRIAL"/>
    <property type="match status" value="1"/>
</dbReference>
<dbReference type="Pfam" id="PF01127">
    <property type="entry name" value="Sdh_cyt"/>
    <property type="match status" value="1"/>
</dbReference>
<dbReference type="SUPFAM" id="SSF81343">
    <property type="entry name" value="Fumarate reductase respiratory complex transmembrane subunits"/>
    <property type="match status" value="1"/>
</dbReference>
<dbReference type="PROSITE" id="PS01000">
    <property type="entry name" value="SDH_CYT_1"/>
    <property type="match status" value="1"/>
</dbReference>
<dbReference type="PROSITE" id="PS01001">
    <property type="entry name" value="SDH_CYT_2"/>
    <property type="match status" value="1"/>
</dbReference>
<protein>
    <recommendedName>
        <fullName>Succinate dehydrogenase cytochrome b560 subunit, mitochondrial</fullName>
    </recommendedName>
    <alternativeName>
        <fullName>Integral membrane protein CII-3</fullName>
    </alternativeName>
    <alternativeName>
        <fullName>Malate dehydrogenase [quinone] cytochrome b560 subunit</fullName>
    </alternativeName>
    <alternativeName>
        <fullName>QPs-1</fullName>
        <shortName>QPs1</shortName>
    </alternativeName>
    <alternativeName>
        <fullName>Succinate dehydrogenase complex subunit C</fullName>
    </alternativeName>
    <alternativeName>
        <fullName>Succinate-ubiquinone oxidoreductase cytochrome B large subunit</fullName>
        <shortName>CYBL</shortName>
    </alternativeName>
</protein>
<evidence type="ECO:0000250" key="1">
    <source>
        <dbReference type="UniProtKB" id="P35720"/>
    </source>
</evidence>
<evidence type="ECO:0000269" key="2">
    <source>
    </source>
</evidence>
<evidence type="ECO:0000269" key="3">
    <source>
    </source>
</evidence>
<evidence type="ECO:0000269" key="4">
    <source>
    </source>
</evidence>
<evidence type="ECO:0000269" key="5">
    <source>
    </source>
</evidence>
<evidence type="ECO:0000303" key="6">
    <source>
    </source>
</evidence>
<evidence type="ECO:0000303" key="7">
    <source>
    </source>
</evidence>
<evidence type="ECO:0000303" key="8">
    <source ref="5"/>
</evidence>
<evidence type="ECO:0000305" key="9"/>
<evidence type="ECO:0007744" key="10">
    <source>
        <dbReference type="PDB" id="8GS8"/>
    </source>
</evidence>
<evidence type="ECO:0007829" key="11">
    <source>
        <dbReference type="PDB" id="8GS8"/>
    </source>
</evidence>
<feature type="transit peptide" description="Mitochondrion" evidence="1">
    <location>
        <begin position="1"/>
        <end position="29"/>
    </location>
</feature>
<feature type="chain" id="PRO_0000003634" description="Succinate dehydrogenase cytochrome b560 subunit, mitochondrial">
    <location>
        <begin position="30"/>
        <end position="169"/>
    </location>
</feature>
<feature type="topological domain" description="Mitochondrial matrix" evidence="4 10">
    <location>
        <begin position="30"/>
        <end position="65"/>
    </location>
</feature>
<feature type="transmembrane region" description="Helical" evidence="4 10">
    <location>
        <begin position="66"/>
        <end position="90"/>
    </location>
</feature>
<feature type="topological domain" description="Mitochondrial intermembrane" evidence="4 10">
    <location>
        <begin position="91"/>
        <end position="110"/>
    </location>
</feature>
<feature type="transmembrane region" description="Helical" evidence="4 10">
    <location>
        <begin position="111"/>
        <end position="139"/>
    </location>
</feature>
<feature type="topological domain" description="Mitochondrial matrix" evidence="4 10">
    <location>
        <begin position="140"/>
        <end position="146"/>
    </location>
</feature>
<feature type="transmembrane region" description="Helical" evidence="4 10">
    <location>
        <begin position="147"/>
        <end position="167"/>
    </location>
</feature>
<feature type="topological domain" description="Mitochondrial intermembrane" evidence="4 10">
    <location>
        <begin position="168"/>
        <end position="169"/>
    </location>
</feature>
<feature type="binding site" description="axial binding residue" evidence="4 10">
    <location>
        <position position="127"/>
    </location>
    <ligand>
        <name>heme b</name>
        <dbReference type="ChEBI" id="CHEBI:60344"/>
        <note>ligand shared with SDHD</note>
    </ligand>
    <ligandPart>
        <name>Fe</name>
        <dbReference type="ChEBI" id="CHEBI:18248"/>
    </ligandPart>
</feature>
<feature type="splice variant" id="VSP_041381" description="In isoform 5." evidence="8">
    <location>
        <begin position="7"/>
        <end position="59"/>
    </location>
</feature>
<feature type="splice variant" id="VSP_041382" description="In isoform 3 and isoform 4." evidence="7 8">
    <location>
        <begin position="27"/>
        <end position="60"/>
    </location>
</feature>
<feature type="splice variant" id="VSP_041383" description="In isoform 2 and isoform 4." evidence="6 8">
    <original>GVSLFGMSALLLPGNFESYLELVKSLCLGPALIHTAKFALVFPLMYHTWNGIRHLMWDLGKGLKIPQLYQSGVVVLVLTVLSSMGLAAM</original>
    <variation>DVGPRKRPEDSPAIPVWSGCPGSYCVVLYGAGSHVKKGGSQHHLPTHYYIHPSFCLSFLSPAWEKFSLFV</variation>
    <location>
        <begin position="81"/>
        <end position="169"/>
    </location>
</feature>
<feature type="helix" evidence="11">
    <location>
        <begin position="35"/>
        <end position="47"/>
    </location>
</feature>
<feature type="turn" evidence="11">
    <location>
        <begin position="56"/>
        <end position="58"/>
    </location>
</feature>
<feature type="helix" evidence="11">
    <location>
        <begin position="63"/>
        <end position="91"/>
    </location>
</feature>
<feature type="helix" evidence="11">
    <location>
        <begin position="96"/>
        <end position="105"/>
    </location>
</feature>
<feature type="helix" evidence="11">
    <location>
        <begin position="110"/>
        <end position="138"/>
    </location>
</feature>
<feature type="helix" evidence="11">
    <location>
        <begin position="145"/>
        <end position="167"/>
    </location>
</feature>
<accession>Q99643</accession>
<accession>O75609</accession>
<accession>Q3C259</accession>
<accession>Q3C2D8</accession>
<accession>Q3C2H4</accession>
<accession>Q5VTH3</accession>
<name>C560_HUMAN</name>
<organism>
    <name type="scientific">Homo sapiens</name>
    <name type="common">Human</name>
    <dbReference type="NCBI Taxonomy" id="9606"/>
    <lineage>
        <taxon>Eukaryota</taxon>
        <taxon>Metazoa</taxon>
        <taxon>Chordata</taxon>
        <taxon>Craniata</taxon>
        <taxon>Vertebrata</taxon>
        <taxon>Euteleostomi</taxon>
        <taxon>Mammalia</taxon>
        <taxon>Eutheria</taxon>
        <taxon>Euarchontoglires</taxon>
        <taxon>Primates</taxon>
        <taxon>Haplorrhini</taxon>
        <taxon>Catarrhini</taxon>
        <taxon>Hominidae</taxon>
        <taxon>Homo</taxon>
    </lineage>
</organism>